<proteinExistence type="evidence at protein level"/>
<sequence>GVPSVSTVNVAQKQHDVNFLLFKVYI</sequence>
<organism evidence="1">
    <name type="scientific">Homarus americanus</name>
    <name type="common">American lobster</name>
    <dbReference type="NCBI Taxonomy" id="6706"/>
    <lineage>
        <taxon>Eukaryota</taxon>
        <taxon>Metazoa</taxon>
        <taxon>Ecdysozoa</taxon>
        <taxon>Arthropoda</taxon>
        <taxon>Crustacea</taxon>
        <taxon>Multicrustacea</taxon>
        <taxon>Malacostraca</taxon>
        <taxon>Eumalacostraca</taxon>
        <taxon>Eucarida</taxon>
        <taxon>Decapoda</taxon>
        <taxon>Pleocyemata</taxon>
        <taxon>Astacidea</taxon>
        <taxon>Nephropoidea</taxon>
        <taxon>Nephropidae</taxon>
        <taxon>Homarus</taxon>
    </lineage>
</organism>
<protein>
    <recommendedName>
        <fullName>Hemocyanin subunit 3</fullName>
    </recommendedName>
</protein>
<evidence type="ECO:0000305" key="1"/>
<comment type="function">
    <text>Hemocyanins are copper-containing oxygen carriers occurring freely dissolved in the hemolymph of many mollusks and arthropods.</text>
</comment>
<comment type="subcellular location">
    <subcellularLocation>
        <location>Secreted</location>
        <location>Extracellular space</location>
    </subcellularLocation>
</comment>
<comment type="tissue specificity">
    <text>Hemolymph.</text>
</comment>
<comment type="similarity">
    <text evidence="1">Belongs to the tyrosinase family. Hemocyanin subfamily.</text>
</comment>
<dbReference type="GO" id="GO:0005576">
    <property type="term" value="C:extracellular region"/>
    <property type="evidence" value="ECO:0007669"/>
    <property type="project" value="UniProtKB-SubCell"/>
</dbReference>
<dbReference type="GO" id="GO:0005344">
    <property type="term" value="F:oxygen carrier activity"/>
    <property type="evidence" value="ECO:0007669"/>
    <property type="project" value="UniProtKB-KW"/>
</dbReference>
<reference evidence="1" key="1">
    <citation type="journal article" date="1999" name="Comp. Biochem. Physiol.">
        <title>Subunit composition and N-terminal analysis of arthropod hemocyanins.</title>
        <authorList>
            <person name="Stoeva S."/>
            <person name="Dolashka P."/>
            <person name="Hristova R."/>
            <person name="Genov N."/>
            <person name="Voelter W."/>
        </authorList>
    </citation>
    <scope>PROTEIN SEQUENCE</scope>
</reference>
<keyword id="KW-0186">Copper</keyword>
<keyword id="KW-0903">Direct protein sequencing</keyword>
<keyword id="KW-0561">Oxygen transport</keyword>
<keyword id="KW-0964">Secreted</keyword>
<keyword id="KW-0813">Transport</keyword>
<feature type="chain" id="PRO_0000204274" description="Hemocyanin subunit 3">
    <location>
        <begin position="1"/>
        <end position="26" status="greater than"/>
    </location>
</feature>
<feature type="non-terminal residue" evidence="1">
    <location>
        <position position="26"/>
    </location>
</feature>
<name>HCY3_HOMAM</name>
<accession>P82298</accession>